<evidence type="ECO:0000250" key="1"/>
<evidence type="ECO:0000255" key="2"/>
<evidence type="ECO:0000255" key="3">
    <source>
        <dbReference type="PROSITE-ProRule" id="PRU00175"/>
    </source>
</evidence>
<evidence type="ECO:0000256" key="4">
    <source>
        <dbReference type="SAM" id="MobiDB-lite"/>
    </source>
</evidence>
<evidence type="ECO:0000305" key="5"/>
<name>ZFPL1_DROPS</name>
<dbReference type="EMBL" id="CM000070">
    <property type="protein sequence ID" value="EAL27921.1"/>
    <property type="molecule type" value="Genomic_DNA"/>
</dbReference>
<dbReference type="RefSeq" id="XP_001358778.1">
    <property type="nucleotide sequence ID" value="XM_001358741.4"/>
</dbReference>
<dbReference type="FunCoup" id="Q298N4">
    <property type="interactions" value="1345"/>
</dbReference>
<dbReference type="STRING" id="46245.Q298N4"/>
<dbReference type="EnsemblMetazoa" id="FBtr0283584">
    <property type="protein sequence ID" value="FBpp0282022"/>
    <property type="gene ID" value="FBgn0078838"/>
</dbReference>
<dbReference type="KEGG" id="dpo:4801735"/>
<dbReference type="eggNOG" id="KOG3970">
    <property type="taxonomic scope" value="Eukaryota"/>
</dbReference>
<dbReference type="HOGENOM" id="CLU_075387_0_0_1"/>
<dbReference type="InParanoid" id="Q298N4"/>
<dbReference type="OMA" id="HDHDYNP"/>
<dbReference type="PhylomeDB" id="Q298N4"/>
<dbReference type="Proteomes" id="UP000001819">
    <property type="component" value="Chromosome 2"/>
</dbReference>
<dbReference type="Bgee" id="FBgn0078838">
    <property type="expression patterns" value="Expressed in female reproductive system and 2 other cell types or tissues"/>
</dbReference>
<dbReference type="GO" id="GO:0005794">
    <property type="term" value="C:Golgi apparatus"/>
    <property type="evidence" value="ECO:0007669"/>
    <property type="project" value="TreeGrafter"/>
</dbReference>
<dbReference type="GO" id="GO:0016020">
    <property type="term" value="C:membrane"/>
    <property type="evidence" value="ECO:0007669"/>
    <property type="project" value="UniProtKB-SubCell"/>
</dbReference>
<dbReference type="GO" id="GO:0008270">
    <property type="term" value="F:zinc ion binding"/>
    <property type="evidence" value="ECO:0007669"/>
    <property type="project" value="UniProtKB-KW"/>
</dbReference>
<dbReference type="CDD" id="cd16487">
    <property type="entry name" value="mRING-H2-C3DHC3_ZFPL1"/>
    <property type="match status" value="1"/>
</dbReference>
<dbReference type="Gene3D" id="3.30.40.10">
    <property type="entry name" value="Zinc/RING finger domain, C3HC4 (zinc finger)"/>
    <property type="match status" value="1"/>
</dbReference>
<dbReference type="InterPro" id="IPR039043">
    <property type="entry name" value="ZFPL1"/>
</dbReference>
<dbReference type="InterPro" id="IPR001841">
    <property type="entry name" value="Znf_RING"/>
</dbReference>
<dbReference type="InterPro" id="IPR013083">
    <property type="entry name" value="Znf_RING/FYVE/PHD"/>
</dbReference>
<dbReference type="PANTHER" id="PTHR12981">
    <property type="entry name" value="ZINC FINGER PROTEIN-LIKE 1"/>
    <property type="match status" value="1"/>
</dbReference>
<dbReference type="PANTHER" id="PTHR12981:SF0">
    <property type="entry name" value="ZINC FINGER PROTEIN-LIKE 1"/>
    <property type="match status" value="1"/>
</dbReference>
<dbReference type="SMART" id="SM00184">
    <property type="entry name" value="RING"/>
    <property type="match status" value="1"/>
</dbReference>
<dbReference type="SUPFAM" id="SSF57850">
    <property type="entry name" value="RING/U-box"/>
    <property type="match status" value="1"/>
</dbReference>
<dbReference type="PROSITE" id="PS50089">
    <property type="entry name" value="ZF_RING_2"/>
    <property type="match status" value="1"/>
</dbReference>
<organism>
    <name type="scientific">Drosophila pseudoobscura pseudoobscura</name>
    <name type="common">Fruit fly</name>
    <dbReference type="NCBI Taxonomy" id="46245"/>
    <lineage>
        <taxon>Eukaryota</taxon>
        <taxon>Metazoa</taxon>
        <taxon>Ecdysozoa</taxon>
        <taxon>Arthropoda</taxon>
        <taxon>Hexapoda</taxon>
        <taxon>Insecta</taxon>
        <taxon>Pterygota</taxon>
        <taxon>Neoptera</taxon>
        <taxon>Endopterygota</taxon>
        <taxon>Diptera</taxon>
        <taxon>Brachycera</taxon>
        <taxon>Muscomorpha</taxon>
        <taxon>Ephydroidea</taxon>
        <taxon>Drosophilidae</taxon>
        <taxon>Drosophila</taxon>
        <taxon>Sophophora</taxon>
    </lineage>
</organism>
<keyword id="KW-0472">Membrane</keyword>
<keyword id="KW-0479">Metal-binding</keyword>
<keyword id="KW-0597">Phosphoprotein</keyword>
<keyword id="KW-1185">Reference proteome</keyword>
<keyword id="KW-0812">Transmembrane</keyword>
<keyword id="KW-1133">Transmembrane helix</keyword>
<keyword id="KW-0862">Zinc</keyword>
<keyword id="KW-0863">Zinc-finger</keyword>
<sequence>MGLCKCPKRLVTNQFCFEHRVNVCEHCMVQSHPKCIVQSYLQWLRDSDYISNCNLCGTSLEQGECVRLVCYHVFHWDCLNARQAALPANTAPRGHQCPGCSVEIFPNTNLVSPVADALKNYLAQVNWGRNGLGLALLSEDQSSSLKAIKSKASVSQAAVSNMTKVHHIHSGGERERGKPNGGDASTPHSVLLMDAFNPPSSGDFNASSRRPLLPRQSPIGGTDRDDNKYQRRTPAALLSRWTRRFYSPSSRPPWRRTWFLVLSGILAFVMFIYLLAWMGRSGSNDGLDESWNNPNPQPNHYE</sequence>
<gene>
    <name type="ORF">GA18838</name>
</gene>
<protein>
    <recommendedName>
        <fullName>Zinc finger protein-like 1 homolog</fullName>
    </recommendedName>
</protein>
<feature type="chain" id="PRO_0000355180" description="Zinc finger protein-like 1 homolog">
    <location>
        <begin position="1"/>
        <end position="302"/>
    </location>
</feature>
<feature type="transmembrane region" description="Helical" evidence="2">
    <location>
        <begin position="258"/>
        <end position="278"/>
    </location>
</feature>
<feature type="zinc finger region" description="B box-type; degenerate">
    <location>
        <begin position="1"/>
        <end position="43"/>
    </location>
</feature>
<feature type="zinc finger region" description="RING-type; atypical" evidence="3">
    <location>
        <begin position="53"/>
        <end position="101"/>
    </location>
</feature>
<feature type="region of interest" description="Disordered" evidence="4">
    <location>
        <begin position="168"/>
        <end position="233"/>
    </location>
</feature>
<feature type="compositionally biased region" description="Polar residues" evidence="4">
    <location>
        <begin position="198"/>
        <end position="208"/>
    </location>
</feature>
<feature type="modified residue" description="Phosphoserine" evidence="1">
    <location>
        <position position="217"/>
    </location>
</feature>
<comment type="subcellular location">
    <subcellularLocation>
        <location evidence="5">Membrane</location>
        <topology evidence="5">Single-pass membrane protein</topology>
    </subcellularLocation>
</comment>
<comment type="similarity">
    <text evidence="5">Belongs to the ZFPL1 family.</text>
</comment>
<accession>Q298N4</accession>
<reference key="1">
    <citation type="journal article" date="2005" name="Genome Res.">
        <title>Comparative genome sequencing of Drosophila pseudoobscura: chromosomal, gene, and cis-element evolution.</title>
        <authorList>
            <person name="Richards S."/>
            <person name="Liu Y."/>
            <person name="Bettencourt B.R."/>
            <person name="Hradecky P."/>
            <person name="Letovsky S."/>
            <person name="Nielsen R."/>
            <person name="Thornton K."/>
            <person name="Hubisz M.J."/>
            <person name="Chen R."/>
            <person name="Meisel R.P."/>
            <person name="Couronne O."/>
            <person name="Hua S."/>
            <person name="Smith M.A."/>
            <person name="Zhang P."/>
            <person name="Liu J."/>
            <person name="Bussemaker H.J."/>
            <person name="van Batenburg M.F."/>
            <person name="Howells S.L."/>
            <person name="Scherer S.E."/>
            <person name="Sodergren E."/>
            <person name="Matthews B.B."/>
            <person name="Crosby M.A."/>
            <person name="Schroeder A.J."/>
            <person name="Ortiz-Barrientos D."/>
            <person name="Rives C.M."/>
            <person name="Metzker M.L."/>
            <person name="Muzny D.M."/>
            <person name="Scott G."/>
            <person name="Steffen D."/>
            <person name="Wheeler D.A."/>
            <person name="Worley K.C."/>
            <person name="Havlak P."/>
            <person name="Durbin K.J."/>
            <person name="Egan A."/>
            <person name="Gill R."/>
            <person name="Hume J."/>
            <person name="Morgan M.B."/>
            <person name="Miner G."/>
            <person name="Hamilton C."/>
            <person name="Huang Y."/>
            <person name="Waldron L."/>
            <person name="Verduzco D."/>
            <person name="Clerc-Blankenburg K.P."/>
            <person name="Dubchak I."/>
            <person name="Noor M.A.F."/>
            <person name="Anderson W."/>
            <person name="White K.P."/>
            <person name="Clark A.G."/>
            <person name="Schaeffer S.W."/>
            <person name="Gelbart W.M."/>
            <person name="Weinstock G.M."/>
            <person name="Gibbs R.A."/>
        </authorList>
    </citation>
    <scope>NUCLEOTIDE SEQUENCE [LARGE SCALE GENOMIC DNA]</scope>
    <source>
        <strain>MV2-25 / Tucson 14011-0121.94</strain>
    </source>
</reference>
<proteinExistence type="inferred from homology"/>